<keyword id="KW-0002">3D-structure</keyword>
<keyword id="KW-0134">Cell wall</keyword>
<keyword id="KW-0446">Lipid-binding</keyword>
<keyword id="KW-0964">Secreted</keyword>
<keyword id="KW-0732">Signal</keyword>
<organism>
    <name type="scientific">Talaromyces marneffei</name>
    <name type="common">Penicillium marneffei</name>
    <dbReference type="NCBI Taxonomy" id="37727"/>
    <lineage>
        <taxon>Eukaryota</taxon>
        <taxon>Fungi</taxon>
        <taxon>Dikarya</taxon>
        <taxon>Ascomycota</taxon>
        <taxon>Pezizomycotina</taxon>
        <taxon>Eurotiomycetes</taxon>
        <taxon>Eurotiomycetidae</taxon>
        <taxon>Eurotiales</taxon>
        <taxon>Trichocomaceae</taxon>
        <taxon>Talaromyces</taxon>
        <taxon>Talaromyces sect. Talaromyces</taxon>
    </lineage>
</organism>
<sequence>MKFLSSLVVLGLSAQALASPYVDHQATKDQRDVNVFKQVLQDINLDVQKFDQDITQYQGGDPTVLLADSDAIIKTTEEGIQRIGPQPPLSVTEALALVGPVQGVNKLIMKAVDHLIEKKGPLVGGGYGPQVKDSLERQAHAASKLSELVSSKVPSPLAPISKQLSDQVAQALQKGIQAFSISARQATKVKREATKVQRDISAFKKVIQNISLAVNKFNVDIERYVGGDASHLLADGNVLIKATLDGVQSLQNEPPLSSMEALALVGPVQDLSNQILLAIQNLIDKKEPLVQAGFGGKVENNLRQQEEAAQKLSELVSTKVPHELADISRQLSDGIAAGIKKGIDAFAGTGPAPTTSSTPEASTAPAPSTPPQTPEDTLVPATSTPAPGPAPTAPDSSMVWPTSTTASPDVQPTITSSGTSVPAAPTGGNSSPAVPAFTGAASANQVSGAVGLAAGLLAVLAF</sequence>
<evidence type="ECO:0000255" key="1"/>
<evidence type="ECO:0000256" key="2">
    <source>
        <dbReference type="SAM" id="MobiDB-lite"/>
    </source>
</evidence>
<evidence type="ECO:0000269" key="3">
    <source>
    </source>
</evidence>
<evidence type="ECO:0000269" key="4">
    <source>
    </source>
</evidence>
<evidence type="ECO:0000269" key="5">
    <source>
    </source>
</evidence>
<evidence type="ECO:0000303" key="6">
    <source>
    </source>
</evidence>
<evidence type="ECO:0000303" key="7">
    <source>
    </source>
</evidence>
<evidence type="ECO:0000303" key="8">
    <source>
    </source>
</evidence>
<evidence type="ECO:0000305" key="9"/>
<evidence type="ECO:0000312" key="10">
    <source>
        <dbReference type="EMBL" id="AAC39367.1"/>
    </source>
</evidence>
<evidence type="ECO:0007744" key="11">
    <source>
        <dbReference type="PDB" id="3L1N"/>
    </source>
</evidence>
<evidence type="ECO:0007829" key="12">
    <source>
        <dbReference type="PDB" id="3L1N"/>
    </source>
</evidence>
<comment type="function">
    <text evidence="4 5">Constitutive protein of the cell wall. Binds fatty acids and may thus serve as a fatty acid transporter between P.marneffei and host cells during infection (PubMed:20053994). Abundant antigen target of host humoral immune response (PubMed:9488383).</text>
</comment>
<comment type="subunit">
    <text evidence="4">Monomer.</text>
</comment>
<comment type="subcellular location">
    <subcellularLocation>
        <location evidence="3 5">Secreted</location>
        <location evidence="3 5">Cell wall</location>
    </subcellularLocation>
    <text evidence="5">Associated with the entire thickness of the cell walls of yeast and conidia found in mold form. Localizes on the outer layers of the hyphal cell walls.</text>
</comment>
<comment type="PTM">
    <text evidence="5">Mannoprotein, glycosylated.</text>
</comment>
<comment type="biotechnology">
    <text evidence="3">An enzyme-linked immunosorbent assay (ELISA) with antibodies against Mp1 protein as well as Mp1 antigen-based ELISA can be used to detect infections caused by P.marneffei (penicilliosis).</text>
</comment>
<comment type="similarity">
    <text evidence="9">Belongs to the cell wall mannoprotein 1 family.</text>
</comment>
<name>MP1_TALMA</name>
<feature type="signal peptide" evidence="1">
    <location>
        <begin position="1"/>
        <end position="18"/>
    </location>
</feature>
<feature type="chain" id="PRO_0000432781" description="Cell wall mannoprotein 1" evidence="1">
    <location>
        <begin position="19"/>
        <end position="462"/>
    </location>
</feature>
<feature type="region of interest" description="Disordered" evidence="2">
    <location>
        <begin position="346"/>
        <end position="429"/>
    </location>
</feature>
<feature type="compositionally biased region" description="Low complexity" evidence="2">
    <location>
        <begin position="347"/>
        <end position="366"/>
    </location>
</feature>
<feature type="compositionally biased region" description="Polar residues" evidence="2">
    <location>
        <begin position="399"/>
        <end position="420"/>
    </location>
</feature>
<feature type="binding site" evidence="4 11">
    <location>
        <position position="313"/>
    </location>
    <ligand>
        <name>hexadecanoate</name>
        <dbReference type="ChEBI" id="CHEBI:7896"/>
    </ligand>
</feature>
<feature type="mutagenesis site" description="2-fold increase in affinity for palmitic acid. Decreased binding affinity for palmitic acid; when associated with A-332." evidence="4">
    <original>S</original>
    <variation>A</variation>
    <location>
        <position position="313"/>
    </location>
</feature>
<feature type="mutagenesis site" description="Decreased binding affinity for palmitic acid; when associated with A-313." evidence="4">
    <original>S</original>
    <variation>A</variation>
    <location>
        <position position="332"/>
    </location>
</feature>
<feature type="helix" evidence="12">
    <location>
        <begin position="201"/>
        <end position="223"/>
    </location>
</feature>
<feature type="helix" evidence="12">
    <location>
        <begin position="230"/>
        <end position="249"/>
    </location>
</feature>
<feature type="turn" evidence="12">
    <location>
        <begin position="250"/>
        <end position="252"/>
    </location>
</feature>
<feature type="helix" evidence="12">
    <location>
        <begin position="258"/>
        <end position="265"/>
    </location>
</feature>
<feature type="helix" evidence="12">
    <location>
        <begin position="267"/>
        <end position="284"/>
    </location>
</feature>
<feature type="helix" evidence="12">
    <location>
        <begin position="286"/>
        <end position="291"/>
    </location>
</feature>
<feature type="helix" evidence="12">
    <location>
        <begin position="295"/>
        <end position="319"/>
    </location>
</feature>
<feature type="helix" evidence="12">
    <location>
        <begin position="322"/>
        <end position="324"/>
    </location>
</feature>
<feature type="helix" evidence="12">
    <location>
        <begin position="325"/>
        <end position="345"/>
    </location>
</feature>
<accession>O42721</accession>
<dbReference type="EMBL" id="AF009957">
    <property type="protein sequence ID" value="AAC39367.1"/>
    <property type="molecule type" value="mRNA"/>
</dbReference>
<dbReference type="PDB" id="3L1N">
    <property type="method" value="X-ray"/>
    <property type="resolution" value="1.30 A"/>
    <property type="chains" value="A=187-346"/>
</dbReference>
<dbReference type="PDBsum" id="3L1N"/>
<dbReference type="SMR" id="O42721"/>
<dbReference type="VEuPathDB" id="FungiDB:PMAA_009820"/>
<dbReference type="EvolutionaryTrace" id="O42721"/>
<dbReference type="GO" id="GO:0005576">
    <property type="term" value="C:extracellular region"/>
    <property type="evidence" value="ECO:0007669"/>
    <property type="project" value="UniProtKB-KW"/>
</dbReference>
<dbReference type="GO" id="GO:0009277">
    <property type="term" value="C:fungal-type cell wall"/>
    <property type="evidence" value="ECO:0000314"/>
    <property type="project" value="UniProtKB"/>
</dbReference>
<dbReference type="GO" id="GO:0030446">
    <property type="term" value="C:hyphal cell wall"/>
    <property type="evidence" value="ECO:0000314"/>
    <property type="project" value="UniProtKB"/>
</dbReference>
<dbReference type="GO" id="GO:0030445">
    <property type="term" value="C:yeast-form cell wall"/>
    <property type="evidence" value="ECO:0000314"/>
    <property type="project" value="UniProtKB"/>
</dbReference>
<dbReference type="GO" id="GO:0005504">
    <property type="term" value="F:fatty acid binding"/>
    <property type="evidence" value="ECO:0000314"/>
    <property type="project" value="UniProtKB"/>
</dbReference>
<dbReference type="GO" id="GO:0005199">
    <property type="term" value="F:structural constituent of cell wall"/>
    <property type="evidence" value="ECO:0000314"/>
    <property type="project" value="UniProtKB"/>
</dbReference>
<dbReference type="GO" id="GO:0031505">
    <property type="term" value="P:fungal-type cell wall organization"/>
    <property type="evidence" value="ECO:0000314"/>
    <property type="project" value="UniProtKB"/>
</dbReference>
<dbReference type="FunFam" id="1.20.1280.140:FF:000001">
    <property type="entry name" value="Cell wall serine-threonine-rich galactomannoprotein Mp1"/>
    <property type="match status" value="2"/>
</dbReference>
<dbReference type="Gene3D" id="1.20.1280.140">
    <property type="match status" value="2"/>
</dbReference>
<dbReference type="Gene3D" id="6.10.140.790">
    <property type="match status" value="2"/>
</dbReference>
<dbReference type="InterPro" id="IPR021054">
    <property type="entry name" value="Cell_wall_mannoprotein_1"/>
</dbReference>
<dbReference type="PANTHER" id="PTHR38123">
    <property type="entry name" value="CELL WALL SERINE-THREONINE-RICH GALACTOMANNOPROTEIN MP1 (AFU_ORTHOLOGUE AFUA_4G03240)"/>
    <property type="match status" value="1"/>
</dbReference>
<dbReference type="PANTHER" id="PTHR38123:SF6">
    <property type="entry name" value="CELL WALL SERINE-THREONINE-RICH GALACTOMANNOPROTEIN MP1 (AFU_ORTHOLOGUE AFUA_4G03240)"/>
    <property type="match status" value="1"/>
</dbReference>
<dbReference type="Pfam" id="PF12296">
    <property type="entry name" value="HsbA"/>
    <property type="match status" value="2"/>
</dbReference>
<reference key="1">
    <citation type="journal article" date="1998" name="Infect. Immun.">
        <title>MP1 encodes an abundant and highly antigenic cell wall mannoprotein in the pathogenic fungus Penicillium marneffei.</title>
        <authorList>
            <person name="Cao L."/>
            <person name="Chan C.M."/>
            <person name="Lee C."/>
            <person name="Wong S.S."/>
            <person name="Yuen K.Y."/>
        </authorList>
    </citation>
    <scope>NUCLEOTIDE SEQUENCE [MRNA]</scope>
    <scope>FUNCTION</scope>
    <scope>IDENTIFICATION AS AN ANTIGEN</scope>
    <scope>SUBCELLULAR LOCATION</scope>
    <scope>GLYCOSYLATION</scope>
    <source>
        <strain evidence="8">PM4</strain>
    </source>
</reference>
<reference key="2">
    <citation type="journal article" date="1999" name="J. Clin. Microbiol.">
        <title>Detection of cell wall mannoprotein Mp1p in culture supernatants of Penicillium marneffei and in sera of penicilliosis patients.</title>
        <authorList>
            <person name="Cao L."/>
            <person name="Chan K.M."/>
            <person name="Chen D."/>
            <person name="Vanittanakom N."/>
            <person name="Lee C."/>
            <person name="Chan C.M."/>
            <person name="Sirisanthana T."/>
            <person name="Tsang D.N."/>
            <person name="Yuen K.Y."/>
        </authorList>
    </citation>
    <scope>SUBCELLULAR LOCATION</scope>
    <scope>BIOTECHNOLOGY</scope>
    <source>
        <strain evidence="6">PM4</strain>
    </source>
</reference>
<reference evidence="11" key="3">
    <citation type="journal article" date="2010" name="J. Biol. Chem.">
        <title>Crystal structure of the Mp1p ligand binding domain 2 reveals its function as a fatty acid-binding protein.</title>
        <authorList>
            <person name="Liao S."/>
            <person name="Tung E.T."/>
            <person name="Zheng W."/>
            <person name="Chong K."/>
            <person name="Xu Y."/>
            <person name="Dai P."/>
            <person name="Guo Y."/>
            <person name="Bartlam M."/>
            <person name="Yuen K.Y."/>
            <person name="Rao Z."/>
        </authorList>
    </citation>
    <scope>X-RAY CRYSTALLOGRAPHY (1.30 ANGSTROMS) OF 187-346 OF MET-207 AND MET-276 MUTANT IN COMPLEX WITH PALMITATE</scope>
    <scope>FUNCTION</scope>
    <scope>SUBUNIT</scope>
    <scope>MUTAGENESIS OF SER-313 AND SER-332</scope>
    <source>
        <strain evidence="7">PM4</strain>
    </source>
</reference>
<protein>
    <recommendedName>
        <fullName evidence="6 8">Cell wall mannoprotein 1</fullName>
    </recommendedName>
</protein>
<proteinExistence type="evidence at protein level"/>
<gene>
    <name evidence="10" type="primary">MP1</name>
</gene>